<keyword id="KW-0029">Amino-acid transport</keyword>
<keyword id="KW-0903">Direct protein sequencing</keyword>
<keyword id="KW-1015">Disulfide bond</keyword>
<keyword id="KW-0574">Periplasm</keyword>
<keyword id="KW-1185">Reference proteome</keyword>
<keyword id="KW-0732">Signal</keyword>
<keyword id="KW-0813">Transport</keyword>
<protein>
    <recommendedName>
        <fullName>Leucine-specific-binding protein</fullName>
        <shortName>L-BP</shortName>
        <shortName>LS-BP</shortName>
    </recommendedName>
</protein>
<name>LIVK_SALTY</name>
<accession>P0A1W6</accession>
<accession>P17216</accession>
<evidence type="ECO:0000250" key="1"/>
<evidence type="ECO:0000305" key="2"/>
<proteinExistence type="evidence at protein level"/>
<comment type="function">
    <text>This protein is a component of the leucine-specific transport system, which is one of the two periplasmic binding protein-dependent transport systems of the high-affinity transport of the branched-chain amino acids.</text>
</comment>
<comment type="subcellular location">
    <subcellularLocation>
        <location>Periplasm</location>
    </subcellularLocation>
</comment>
<comment type="similarity">
    <text evidence="2">Belongs to the leucine-binding protein family.</text>
</comment>
<gene>
    <name type="primary">livK</name>
    <name type="synonym">livC</name>
    <name type="ordered locus">STM3564</name>
</gene>
<dbReference type="EMBL" id="D00478">
    <property type="protein sequence ID" value="BAA00370.1"/>
    <property type="molecule type" value="Genomic_DNA"/>
</dbReference>
<dbReference type="EMBL" id="AE006468">
    <property type="protein sequence ID" value="AAL22424.1"/>
    <property type="molecule type" value="Genomic_DNA"/>
</dbReference>
<dbReference type="PIR" id="JU0129">
    <property type="entry name" value="JU0129"/>
</dbReference>
<dbReference type="RefSeq" id="NP_462465.1">
    <property type="nucleotide sequence ID" value="NC_003197.2"/>
</dbReference>
<dbReference type="RefSeq" id="WP_000822976.1">
    <property type="nucleotide sequence ID" value="NC_003197.2"/>
</dbReference>
<dbReference type="SMR" id="P0A1W6"/>
<dbReference type="STRING" id="99287.STM3564"/>
<dbReference type="PaxDb" id="99287-STM3564"/>
<dbReference type="GeneID" id="1255087"/>
<dbReference type="KEGG" id="stm:STM3564"/>
<dbReference type="PATRIC" id="fig|99287.12.peg.3767"/>
<dbReference type="HOGENOM" id="CLU_027128_6_0_6"/>
<dbReference type="OMA" id="GFVMAKF"/>
<dbReference type="PhylomeDB" id="P0A1W6"/>
<dbReference type="BioCyc" id="SENT99287:STM3564-MONOMER"/>
<dbReference type="Proteomes" id="UP000001014">
    <property type="component" value="Chromosome"/>
</dbReference>
<dbReference type="GO" id="GO:0030288">
    <property type="term" value="C:outer membrane-bounded periplasmic space"/>
    <property type="evidence" value="ECO:0000318"/>
    <property type="project" value="GO_Central"/>
</dbReference>
<dbReference type="GO" id="GO:0015818">
    <property type="term" value="P:isoleucine transport"/>
    <property type="evidence" value="ECO:0000318"/>
    <property type="project" value="GO_Central"/>
</dbReference>
<dbReference type="GO" id="GO:0015820">
    <property type="term" value="P:L-leucine transport"/>
    <property type="evidence" value="ECO:0000318"/>
    <property type="project" value="GO_Central"/>
</dbReference>
<dbReference type="GO" id="GO:0015829">
    <property type="term" value="P:valine transport"/>
    <property type="evidence" value="ECO:0000318"/>
    <property type="project" value="GO_Central"/>
</dbReference>
<dbReference type="CDD" id="cd06342">
    <property type="entry name" value="PBP1_ABC_LIVBP-like"/>
    <property type="match status" value="1"/>
</dbReference>
<dbReference type="FunFam" id="3.40.50.2300:FF:000033">
    <property type="entry name" value="Amino acid ABC transporter substrate-binding protein"/>
    <property type="match status" value="1"/>
</dbReference>
<dbReference type="Gene3D" id="3.40.50.2300">
    <property type="match status" value="2"/>
</dbReference>
<dbReference type="InterPro" id="IPR028081">
    <property type="entry name" value="Leu-bd"/>
</dbReference>
<dbReference type="InterPro" id="IPR000709">
    <property type="entry name" value="Leu_Ile_Val-bd"/>
</dbReference>
<dbReference type="InterPro" id="IPR028082">
    <property type="entry name" value="Peripla_BP_I"/>
</dbReference>
<dbReference type="NCBIfam" id="NF011933">
    <property type="entry name" value="PRK15404.1"/>
    <property type="match status" value="1"/>
</dbReference>
<dbReference type="PANTHER" id="PTHR47151">
    <property type="entry name" value="LEU/ILE/VAL-BINDING ABC TRANSPORTER SUBUNIT"/>
    <property type="match status" value="1"/>
</dbReference>
<dbReference type="PANTHER" id="PTHR47151:SF3">
    <property type="entry name" value="LEUCINE-SPECIFIC-BINDING PROTEIN"/>
    <property type="match status" value="1"/>
</dbReference>
<dbReference type="Pfam" id="PF13458">
    <property type="entry name" value="Peripla_BP_6"/>
    <property type="match status" value="1"/>
</dbReference>
<dbReference type="PRINTS" id="PR00337">
    <property type="entry name" value="LEUILEVALBP"/>
</dbReference>
<dbReference type="SUPFAM" id="SSF53822">
    <property type="entry name" value="Periplasmic binding protein-like I"/>
    <property type="match status" value="1"/>
</dbReference>
<reference key="1">
    <citation type="journal article" date="1990" name="J. Biochem.">
        <title>Cloning and nucleotide sequences of livB and livC, the structural genes encoding binding proteins of the high-affinity branched-chain amino acid transport in Salmonella typhimurium.</title>
        <authorList>
            <person name="Ohnishi K."/>
            <person name="Nakazima A."/>
            <person name="Matsubara K."/>
            <person name="Kiritani K."/>
        </authorList>
    </citation>
    <scope>NUCLEOTIDE SEQUENCE [GENOMIC DNA]</scope>
    <scope>PROTEIN SEQUENCE OF 25-40</scope>
    <source>
        <strain>LT2</strain>
    </source>
</reference>
<reference key="2">
    <citation type="journal article" date="2001" name="Nature">
        <title>Complete genome sequence of Salmonella enterica serovar Typhimurium LT2.</title>
        <authorList>
            <person name="McClelland M."/>
            <person name="Sanderson K.E."/>
            <person name="Spieth J."/>
            <person name="Clifton S.W."/>
            <person name="Latreille P."/>
            <person name="Courtney L."/>
            <person name="Porwollik S."/>
            <person name="Ali J."/>
            <person name="Dante M."/>
            <person name="Du F."/>
            <person name="Hou S."/>
            <person name="Layman D."/>
            <person name="Leonard S."/>
            <person name="Nguyen C."/>
            <person name="Scott K."/>
            <person name="Holmes A."/>
            <person name="Grewal N."/>
            <person name="Mulvaney E."/>
            <person name="Ryan E."/>
            <person name="Sun H."/>
            <person name="Florea L."/>
            <person name="Miller W."/>
            <person name="Stoneking T."/>
            <person name="Nhan M."/>
            <person name="Waterston R."/>
            <person name="Wilson R.K."/>
        </authorList>
    </citation>
    <scope>NUCLEOTIDE SEQUENCE [LARGE SCALE GENOMIC DNA]</scope>
    <source>
        <strain>LT2 / SGSC1412 / ATCC 700720</strain>
    </source>
</reference>
<sequence>MKRKAKTIIAGIVALAVSQGAMADDIKVAIVGAMSGPVAQWGDMEFNGARQAIKDINAKGGIKGDKLVGVEYDDACDPKQAVAVANKIVNDGIQYVIGHLCSSSTQPASDIYEDEGILMISPGATNPELTQRGYQYIMRTAGLDSSQGPTAAKYILETVKPQRIAIIHDKQQYGEGLARSVQDGLKQGNANIVFFDGITAGEKDFSALIARLQKENIDFVYYGGYYPEMGQMLRQARANGLKTQFMGPEGVGNASLSNIAGGAAEGMLVTMPKRYDQDPANKAIVEALKADKKDPSGPYVWITYAAVQSLATAMTRSASHAPLDLVKDLKANGADTVIGPLKWDEKGDLKGFEFGVFQWHADGSSTVAK</sequence>
<organism>
    <name type="scientific">Salmonella typhimurium (strain LT2 / SGSC1412 / ATCC 700720)</name>
    <dbReference type="NCBI Taxonomy" id="99287"/>
    <lineage>
        <taxon>Bacteria</taxon>
        <taxon>Pseudomonadati</taxon>
        <taxon>Pseudomonadota</taxon>
        <taxon>Gammaproteobacteria</taxon>
        <taxon>Enterobacterales</taxon>
        <taxon>Enterobacteriaceae</taxon>
        <taxon>Salmonella</taxon>
    </lineage>
</organism>
<feature type="signal peptide">
    <location>
        <begin position="1"/>
        <end position="23"/>
    </location>
</feature>
<feature type="chain" id="PRO_0000017704" description="Leucine-specific-binding protein">
    <location>
        <begin position="24"/>
        <end position="369"/>
    </location>
</feature>
<feature type="disulfide bond" evidence="1">
    <location>
        <begin position="76"/>
        <end position="101"/>
    </location>
</feature>
<feature type="sequence conflict" description="In Ref. 1; BAA00370." evidence="2" ref="1">
    <original>ML</original>
    <variation>IV</variation>
    <location>
        <begin position="232"/>
        <end position="233"/>
    </location>
</feature>
<feature type="sequence conflict" description="In Ref. 1; BAA00370." evidence="2" ref="1">
    <original>A</original>
    <variation>R</variation>
    <location>
        <position position="321"/>
    </location>
</feature>